<name>RS7_TROWT</name>
<reference key="1">
    <citation type="journal article" date="2003" name="Genome Res.">
        <title>Tropheryma whipplei twist: a human pathogenic Actinobacteria with a reduced genome.</title>
        <authorList>
            <person name="Raoult D."/>
            <person name="Ogata H."/>
            <person name="Audic S."/>
            <person name="Robert C."/>
            <person name="Suhre K."/>
            <person name="Drancourt M."/>
            <person name="Claverie J.-M."/>
        </authorList>
    </citation>
    <scope>NUCLEOTIDE SEQUENCE [LARGE SCALE GENOMIC DNA]</scope>
    <source>
        <strain>Twist</strain>
    </source>
</reference>
<sequence length="156" mass="17556">MPRKGPVVRREIPEDPVYSSRVVSQLIGRVLLSGKKSLAQRIVYSALDKVSMKASEDPVSVLRKALDNVRPSLEVRSRRVGGSTYQVPVPVRSHRADALAIRWLTVYSRARREKSMVDRLASEILDASNGVGATVKCKEDTHRMAESNRAFAHYRW</sequence>
<feature type="chain" id="PRO_0000124375" description="Small ribosomal subunit protein uS7">
    <location>
        <begin position="1"/>
        <end position="156"/>
    </location>
</feature>
<dbReference type="EMBL" id="AE014184">
    <property type="protein sequence ID" value="AAO44773.1"/>
    <property type="molecule type" value="Genomic_DNA"/>
</dbReference>
<dbReference type="RefSeq" id="WP_011096632.1">
    <property type="nucleotide sequence ID" value="NC_004572.3"/>
</dbReference>
<dbReference type="SMR" id="Q83FP0"/>
<dbReference type="STRING" id="203267.TWT_676"/>
<dbReference type="GeneID" id="67388471"/>
<dbReference type="KEGG" id="twh:TWT_676"/>
<dbReference type="eggNOG" id="COG0049">
    <property type="taxonomic scope" value="Bacteria"/>
</dbReference>
<dbReference type="HOGENOM" id="CLU_072226_1_1_11"/>
<dbReference type="OrthoDB" id="9807653at2"/>
<dbReference type="Proteomes" id="UP000002200">
    <property type="component" value="Chromosome"/>
</dbReference>
<dbReference type="GO" id="GO:0015935">
    <property type="term" value="C:small ribosomal subunit"/>
    <property type="evidence" value="ECO:0007669"/>
    <property type="project" value="InterPro"/>
</dbReference>
<dbReference type="GO" id="GO:0019843">
    <property type="term" value="F:rRNA binding"/>
    <property type="evidence" value="ECO:0007669"/>
    <property type="project" value="UniProtKB-UniRule"/>
</dbReference>
<dbReference type="GO" id="GO:0003735">
    <property type="term" value="F:structural constituent of ribosome"/>
    <property type="evidence" value="ECO:0007669"/>
    <property type="project" value="InterPro"/>
</dbReference>
<dbReference type="GO" id="GO:0000049">
    <property type="term" value="F:tRNA binding"/>
    <property type="evidence" value="ECO:0007669"/>
    <property type="project" value="UniProtKB-UniRule"/>
</dbReference>
<dbReference type="GO" id="GO:0006412">
    <property type="term" value="P:translation"/>
    <property type="evidence" value="ECO:0007669"/>
    <property type="project" value="UniProtKB-UniRule"/>
</dbReference>
<dbReference type="CDD" id="cd14869">
    <property type="entry name" value="uS7_Bacteria"/>
    <property type="match status" value="1"/>
</dbReference>
<dbReference type="FunFam" id="1.10.455.10:FF:000001">
    <property type="entry name" value="30S ribosomal protein S7"/>
    <property type="match status" value="1"/>
</dbReference>
<dbReference type="Gene3D" id="1.10.455.10">
    <property type="entry name" value="Ribosomal protein S7 domain"/>
    <property type="match status" value="1"/>
</dbReference>
<dbReference type="HAMAP" id="MF_00480_B">
    <property type="entry name" value="Ribosomal_uS7_B"/>
    <property type="match status" value="1"/>
</dbReference>
<dbReference type="InterPro" id="IPR000235">
    <property type="entry name" value="Ribosomal_uS7"/>
</dbReference>
<dbReference type="InterPro" id="IPR005717">
    <property type="entry name" value="Ribosomal_uS7_bac/org-type"/>
</dbReference>
<dbReference type="InterPro" id="IPR020606">
    <property type="entry name" value="Ribosomal_uS7_CS"/>
</dbReference>
<dbReference type="InterPro" id="IPR023798">
    <property type="entry name" value="Ribosomal_uS7_dom"/>
</dbReference>
<dbReference type="InterPro" id="IPR036823">
    <property type="entry name" value="Ribosomal_uS7_dom_sf"/>
</dbReference>
<dbReference type="NCBIfam" id="TIGR01029">
    <property type="entry name" value="rpsG_bact"/>
    <property type="match status" value="1"/>
</dbReference>
<dbReference type="PANTHER" id="PTHR11205">
    <property type="entry name" value="RIBOSOMAL PROTEIN S7"/>
    <property type="match status" value="1"/>
</dbReference>
<dbReference type="Pfam" id="PF00177">
    <property type="entry name" value="Ribosomal_S7"/>
    <property type="match status" value="1"/>
</dbReference>
<dbReference type="PIRSF" id="PIRSF002122">
    <property type="entry name" value="RPS7p_RPS7a_RPS5e_RPS7o"/>
    <property type="match status" value="1"/>
</dbReference>
<dbReference type="SUPFAM" id="SSF47973">
    <property type="entry name" value="Ribosomal protein S7"/>
    <property type="match status" value="1"/>
</dbReference>
<dbReference type="PROSITE" id="PS00052">
    <property type="entry name" value="RIBOSOMAL_S7"/>
    <property type="match status" value="1"/>
</dbReference>
<gene>
    <name evidence="1" type="primary">rpsG</name>
    <name type="ordered locus">TWT_676</name>
</gene>
<protein>
    <recommendedName>
        <fullName evidence="1">Small ribosomal subunit protein uS7</fullName>
    </recommendedName>
    <alternativeName>
        <fullName evidence="2">30S ribosomal protein S7</fullName>
    </alternativeName>
</protein>
<organism>
    <name type="scientific">Tropheryma whipplei (strain Twist)</name>
    <name type="common">Whipple's bacillus</name>
    <dbReference type="NCBI Taxonomy" id="203267"/>
    <lineage>
        <taxon>Bacteria</taxon>
        <taxon>Bacillati</taxon>
        <taxon>Actinomycetota</taxon>
        <taxon>Actinomycetes</taxon>
        <taxon>Micrococcales</taxon>
        <taxon>Tropherymataceae</taxon>
        <taxon>Tropheryma</taxon>
    </lineage>
</organism>
<comment type="function">
    <text evidence="1">One of the primary rRNA binding proteins, it binds directly to 16S rRNA where it nucleates assembly of the head domain of the 30S subunit. Is located at the subunit interface close to the decoding center, probably blocks exit of the E-site tRNA.</text>
</comment>
<comment type="subunit">
    <text evidence="1">Part of the 30S ribosomal subunit. Contacts proteins S9 and S11.</text>
</comment>
<comment type="similarity">
    <text evidence="1">Belongs to the universal ribosomal protein uS7 family.</text>
</comment>
<proteinExistence type="inferred from homology"/>
<keyword id="KW-1185">Reference proteome</keyword>
<keyword id="KW-0687">Ribonucleoprotein</keyword>
<keyword id="KW-0689">Ribosomal protein</keyword>
<keyword id="KW-0694">RNA-binding</keyword>
<keyword id="KW-0699">rRNA-binding</keyword>
<keyword id="KW-0820">tRNA-binding</keyword>
<evidence type="ECO:0000255" key="1">
    <source>
        <dbReference type="HAMAP-Rule" id="MF_00480"/>
    </source>
</evidence>
<evidence type="ECO:0000305" key="2"/>
<accession>Q83FP0</accession>